<feature type="chain" id="PRO_1000082118" description="Succinate--CoA ligase [ADP-forming] subunit beta">
    <location>
        <begin position="1"/>
        <end position="398"/>
    </location>
</feature>
<feature type="domain" description="ATP-grasp" evidence="1">
    <location>
        <begin position="9"/>
        <end position="253"/>
    </location>
</feature>
<feature type="binding site" evidence="1">
    <location>
        <position position="46"/>
    </location>
    <ligand>
        <name>ATP</name>
        <dbReference type="ChEBI" id="CHEBI:30616"/>
    </ligand>
</feature>
<feature type="binding site" evidence="1">
    <location>
        <begin position="53"/>
        <end position="55"/>
    </location>
    <ligand>
        <name>ATP</name>
        <dbReference type="ChEBI" id="CHEBI:30616"/>
    </ligand>
</feature>
<feature type="binding site" evidence="1">
    <location>
        <position position="108"/>
    </location>
    <ligand>
        <name>ATP</name>
        <dbReference type="ChEBI" id="CHEBI:30616"/>
    </ligand>
</feature>
<feature type="binding site" evidence="1">
    <location>
        <position position="111"/>
    </location>
    <ligand>
        <name>ATP</name>
        <dbReference type="ChEBI" id="CHEBI:30616"/>
    </ligand>
</feature>
<feature type="binding site" evidence="1">
    <location>
        <position position="116"/>
    </location>
    <ligand>
        <name>ATP</name>
        <dbReference type="ChEBI" id="CHEBI:30616"/>
    </ligand>
</feature>
<feature type="binding site" evidence="1">
    <location>
        <position position="208"/>
    </location>
    <ligand>
        <name>Mg(2+)</name>
        <dbReference type="ChEBI" id="CHEBI:18420"/>
    </ligand>
</feature>
<feature type="binding site" evidence="1">
    <location>
        <position position="222"/>
    </location>
    <ligand>
        <name>Mg(2+)</name>
        <dbReference type="ChEBI" id="CHEBI:18420"/>
    </ligand>
</feature>
<feature type="binding site" evidence="1">
    <location>
        <position position="273"/>
    </location>
    <ligand>
        <name>substrate</name>
        <note>ligand shared with subunit alpha</note>
    </ligand>
</feature>
<feature type="binding site" evidence="1">
    <location>
        <begin position="330"/>
        <end position="332"/>
    </location>
    <ligand>
        <name>substrate</name>
        <note>ligand shared with subunit alpha</note>
    </ligand>
</feature>
<organism>
    <name type="scientific">Paramagnetospirillum magneticum (strain ATCC 700264 / AMB-1)</name>
    <name type="common">Magnetospirillum magneticum</name>
    <dbReference type="NCBI Taxonomy" id="342108"/>
    <lineage>
        <taxon>Bacteria</taxon>
        <taxon>Pseudomonadati</taxon>
        <taxon>Pseudomonadota</taxon>
        <taxon>Alphaproteobacteria</taxon>
        <taxon>Rhodospirillales</taxon>
        <taxon>Magnetospirillaceae</taxon>
        <taxon>Paramagnetospirillum</taxon>
    </lineage>
</organism>
<name>SUCC_PARM1</name>
<sequence length="398" mass="42633">MNIHEYQGKQVLAKYGVAVLKGGVAYTPDEAVQVAKDLGGPVWVVKSQIHAGGRGAGRFKNDPNGKGGVRVAKSVEEVKTNVDQMLGQVLITKQTGPAGKEVKRVYIEQGCDIKRELYLSMLVDRATCRVTIVASTEGGMEIEEVAHNHPEKILKVAIDPVEGFQQYHGRQIAFGLGLEGKQVNTCVKFVGALYKAFMDLDCSIVEINPLVVTGAGELIALDAKVNFDDNALFRHKDIEELRDESEEDPAELEAARHSLNYIKLDGQIGCMVNGAGLAMATMDIIKLYGAEPANFLDVGGGATKERVTTAFKLILSDPNVEGILVNIFGGIMRCDVIAEGVVAAAREVSLNVPLVVRLEGTNVELGKKIMAQSGLPIIAADNLADAAEKVVKAVKEAA</sequence>
<proteinExistence type="inferred from homology"/>
<comment type="function">
    <text evidence="1">Succinyl-CoA synthetase functions in the citric acid cycle (TCA), coupling the hydrolysis of succinyl-CoA to the synthesis of either ATP or GTP and thus represents the only step of substrate-level phosphorylation in the TCA. The beta subunit provides nucleotide specificity of the enzyme and binds the substrate succinate, while the binding sites for coenzyme A and phosphate are found in the alpha subunit.</text>
</comment>
<comment type="catalytic activity">
    <reaction evidence="1">
        <text>succinate + ATP + CoA = succinyl-CoA + ADP + phosphate</text>
        <dbReference type="Rhea" id="RHEA:17661"/>
        <dbReference type="ChEBI" id="CHEBI:30031"/>
        <dbReference type="ChEBI" id="CHEBI:30616"/>
        <dbReference type="ChEBI" id="CHEBI:43474"/>
        <dbReference type="ChEBI" id="CHEBI:57287"/>
        <dbReference type="ChEBI" id="CHEBI:57292"/>
        <dbReference type="ChEBI" id="CHEBI:456216"/>
        <dbReference type="EC" id="6.2.1.5"/>
    </reaction>
    <physiologicalReaction direction="right-to-left" evidence="1">
        <dbReference type="Rhea" id="RHEA:17663"/>
    </physiologicalReaction>
</comment>
<comment type="catalytic activity">
    <reaction evidence="1">
        <text>GTP + succinate + CoA = succinyl-CoA + GDP + phosphate</text>
        <dbReference type="Rhea" id="RHEA:22120"/>
        <dbReference type="ChEBI" id="CHEBI:30031"/>
        <dbReference type="ChEBI" id="CHEBI:37565"/>
        <dbReference type="ChEBI" id="CHEBI:43474"/>
        <dbReference type="ChEBI" id="CHEBI:57287"/>
        <dbReference type="ChEBI" id="CHEBI:57292"/>
        <dbReference type="ChEBI" id="CHEBI:58189"/>
    </reaction>
    <physiologicalReaction direction="right-to-left" evidence="1">
        <dbReference type="Rhea" id="RHEA:22122"/>
    </physiologicalReaction>
</comment>
<comment type="cofactor">
    <cofactor evidence="1">
        <name>Mg(2+)</name>
        <dbReference type="ChEBI" id="CHEBI:18420"/>
    </cofactor>
    <text evidence="1">Binds 1 Mg(2+) ion per subunit.</text>
</comment>
<comment type="pathway">
    <text evidence="1">Carbohydrate metabolism; tricarboxylic acid cycle; succinate from succinyl-CoA (ligase route): step 1/1.</text>
</comment>
<comment type="subunit">
    <text evidence="1">Heterotetramer of two alpha and two beta subunits.</text>
</comment>
<comment type="similarity">
    <text evidence="1">Belongs to the succinate/malate CoA ligase beta subunit family.</text>
</comment>
<accession>Q2W063</accession>
<reference key="1">
    <citation type="journal article" date="2005" name="DNA Res.">
        <title>Complete genome sequence of the facultative anaerobic magnetotactic bacterium Magnetospirillum sp. strain AMB-1.</title>
        <authorList>
            <person name="Matsunaga T."/>
            <person name="Okamura Y."/>
            <person name="Fukuda Y."/>
            <person name="Wahyudi A.T."/>
            <person name="Murase Y."/>
            <person name="Takeyama H."/>
        </authorList>
    </citation>
    <scope>NUCLEOTIDE SEQUENCE [LARGE SCALE GENOMIC DNA]</scope>
    <source>
        <strain>ATCC 700264 / AMB-1</strain>
    </source>
</reference>
<gene>
    <name evidence="1" type="primary">sucC</name>
    <name type="ordered locus">amb3958</name>
</gene>
<dbReference type="EC" id="6.2.1.5" evidence="1"/>
<dbReference type="EMBL" id="AP007255">
    <property type="protein sequence ID" value="BAE52762.1"/>
    <property type="molecule type" value="Genomic_DNA"/>
</dbReference>
<dbReference type="RefSeq" id="WP_011386312.1">
    <property type="nucleotide sequence ID" value="NC_007626.1"/>
</dbReference>
<dbReference type="SMR" id="Q2W063"/>
<dbReference type="STRING" id="342108.amb3958"/>
<dbReference type="KEGG" id="mag:amb3958"/>
<dbReference type="HOGENOM" id="CLU_037430_0_2_5"/>
<dbReference type="OrthoDB" id="9802602at2"/>
<dbReference type="UniPathway" id="UPA00223">
    <property type="reaction ID" value="UER00999"/>
</dbReference>
<dbReference type="Proteomes" id="UP000007058">
    <property type="component" value="Chromosome"/>
</dbReference>
<dbReference type="GO" id="GO:0005829">
    <property type="term" value="C:cytosol"/>
    <property type="evidence" value="ECO:0007669"/>
    <property type="project" value="TreeGrafter"/>
</dbReference>
<dbReference type="GO" id="GO:0042709">
    <property type="term" value="C:succinate-CoA ligase complex"/>
    <property type="evidence" value="ECO:0007669"/>
    <property type="project" value="TreeGrafter"/>
</dbReference>
<dbReference type="GO" id="GO:0005524">
    <property type="term" value="F:ATP binding"/>
    <property type="evidence" value="ECO:0007669"/>
    <property type="project" value="UniProtKB-UniRule"/>
</dbReference>
<dbReference type="GO" id="GO:0000287">
    <property type="term" value="F:magnesium ion binding"/>
    <property type="evidence" value="ECO:0007669"/>
    <property type="project" value="UniProtKB-UniRule"/>
</dbReference>
<dbReference type="GO" id="GO:0004775">
    <property type="term" value="F:succinate-CoA ligase (ADP-forming) activity"/>
    <property type="evidence" value="ECO:0007669"/>
    <property type="project" value="UniProtKB-UniRule"/>
</dbReference>
<dbReference type="GO" id="GO:0004776">
    <property type="term" value="F:succinate-CoA ligase (GDP-forming) activity"/>
    <property type="evidence" value="ECO:0007669"/>
    <property type="project" value="RHEA"/>
</dbReference>
<dbReference type="GO" id="GO:0006104">
    <property type="term" value="P:succinyl-CoA metabolic process"/>
    <property type="evidence" value="ECO:0007669"/>
    <property type="project" value="TreeGrafter"/>
</dbReference>
<dbReference type="GO" id="GO:0006099">
    <property type="term" value="P:tricarboxylic acid cycle"/>
    <property type="evidence" value="ECO:0007669"/>
    <property type="project" value="UniProtKB-UniRule"/>
</dbReference>
<dbReference type="FunFam" id="3.30.1490.20:FF:000002">
    <property type="entry name" value="Succinate--CoA ligase [ADP-forming] subunit beta"/>
    <property type="match status" value="1"/>
</dbReference>
<dbReference type="FunFam" id="3.30.470.20:FF:000002">
    <property type="entry name" value="Succinate--CoA ligase [ADP-forming] subunit beta"/>
    <property type="match status" value="1"/>
</dbReference>
<dbReference type="FunFam" id="3.40.50.261:FF:000001">
    <property type="entry name" value="Succinate--CoA ligase [ADP-forming] subunit beta"/>
    <property type="match status" value="1"/>
</dbReference>
<dbReference type="Gene3D" id="3.30.1490.20">
    <property type="entry name" value="ATP-grasp fold, A domain"/>
    <property type="match status" value="1"/>
</dbReference>
<dbReference type="Gene3D" id="3.30.470.20">
    <property type="entry name" value="ATP-grasp fold, B domain"/>
    <property type="match status" value="1"/>
</dbReference>
<dbReference type="Gene3D" id="3.40.50.261">
    <property type="entry name" value="Succinyl-CoA synthetase domains"/>
    <property type="match status" value="1"/>
</dbReference>
<dbReference type="HAMAP" id="MF_00558">
    <property type="entry name" value="Succ_CoA_beta"/>
    <property type="match status" value="1"/>
</dbReference>
<dbReference type="InterPro" id="IPR011761">
    <property type="entry name" value="ATP-grasp"/>
</dbReference>
<dbReference type="InterPro" id="IPR013650">
    <property type="entry name" value="ATP-grasp_succ-CoA_synth-type"/>
</dbReference>
<dbReference type="InterPro" id="IPR013815">
    <property type="entry name" value="ATP_grasp_subdomain_1"/>
</dbReference>
<dbReference type="InterPro" id="IPR017866">
    <property type="entry name" value="Succ-CoA_synthase_bsu_CS"/>
</dbReference>
<dbReference type="InterPro" id="IPR005811">
    <property type="entry name" value="SUCC_ACL_C"/>
</dbReference>
<dbReference type="InterPro" id="IPR005809">
    <property type="entry name" value="Succ_CoA_ligase-like_bsu"/>
</dbReference>
<dbReference type="InterPro" id="IPR016102">
    <property type="entry name" value="Succinyl-CoA_synth-like"/>
</dbReference>
<dbReference type="NCBIfam" id="NF001913">
    <property type="entry name" value="PRK00696.1"/>
    <property type="match status" value="1"/>
</dbReference>
<dbReference type="NCBIfam" id="TIGR01016">
    <property type="entry name" value="sucCoAbeta"/>
    <property type="match status" value="1"/>
</dbReference>
<dbReference type="PANTHER" id="PTHR11815:SF10">
    <property type="entry name" value="SUCCINATE--COA LIGASE [GDP-FORMING] SUBUNIT BETA, MITOCHONDRIAL"/>
    <property type="match status" value="1"/>
</dbReference>
<dbReference type="PANTHER" id="PTHR11815">
    <property type="entry name" value="SUCCINYL-COA SYNTHETASE BETA CHAIN"/>
    <property type="match status" value="1"/>
</dbReference>
<dbReference type="Pfam" id="PF08442">
    <property type="entry name" value="ATP-grasp_2"/>
    <property type="match status" value="1"/>
</dbReference>
<dbReference type="Pfam" id="PF00549">
    <property type="entry name" value="Ligase_CoA"/>
    <property type="match status" value="1"/>
</dbReference>
<dbReference type="PIRSF" id="PIRSF001554">
    <property type="entry name" value="SucCS_beta"/>
    <property type="match status" value="1"/>
</dbReference>
<dbReference type="SUPFAM" id="SSF56059">
    <property type="entry name" value="Glutathione synthetase ATP-binding domain-like"/>
    <property type="match status" value="1"/>
</dbReference>
<dbReference type="SUPFAM" id="SSF52210">
    <property type="entry name" value="Succinyl-CoA synthetase domains"/>
    <property type="match status" value="1"/>
</dbReference>
<dbReference type="PROSITE" id="PS50975">
    <property type="entry name" value="ATP_GRASP"/>
    <property type="match status" value="1"/>
</dbReference>
<dbReference type="PROSITE" id="PS01217">
    <property type="entry name" value="SUCCINYL_COA_LIG_3"/>
    <property type="match status" value="1"/>
</dbReference>
<protein>
    <recommendedName>
        <fullName evidence="1">Succinate--CoA ligase [ADP-forming] subunit beta</fullName>
        <ecNumber evidence="1">6.2.1.5</ecNumber>
    </recommendedName>
    <alternativeName>
        <fullName evidence="1">Succinyl-CoA synthetase subunit beta</fullName>
        <shortName evidence="1">SCS-beta</shortName>
    </alternativeName>
</protein>
<evidence type="ECO:0000255" key="1">
    <source>
        <dbReference type="HAMAP-Rule" id="MF_00558"/>
    </source>
</evidence>
<keyword id="KW-0067">ATP-binding</keyword>
<keyword id="KW-0436">Ligase</keyword>
<keyword id="KW-0460">Magnesium</keyword>
<keyword id="KW-0479">Metal-binding</keyword>
<keyword id="KW-0547">Nucleotide-binding</keyword>
<keyword id="KW-0816">Tricarboxylic acid cycle</keyword>